<sequence>MTRSLKKNPFVANHLLKKIDKLNTKAEKEIIVTWSRASTIIPTMIGHTIAIHNGKEHLPIYITDSMVGHKLGEFAPTLNFRGHAKSDNRSRR</sequence>
<name>RR19_TOBAC</name>
<reference key="1">
    <citation type="journal article" date="1983" name="Nucleic Acids Res.">
        <title>A putative gene of tobacco chloroplast coding for ribosomal protein similar to E. coli ribosomal protein S19.</title>
        <authorList>
            <person name="Sugita M."/>
            <person name="Sugiura M."/>
        </authorList>
    </citation>
    <scope>NUCLEOTIDE SEQUENCE [GENOMIC DNA]</scope>
</reference>
<reference key="2">
    <citation type="journal article" date="1986" name="Proc. Natl. Acad. Sci. U.S.A.">
        <title>Genes for the eight ribosomal proteins are clustered on the chloroplast genome of tobacco (Nicotiana tabacum): similarity to the S10 and spc operons of Escherichia coli.</title>
        <authorList>
            <person name="Tanaka M."/>
            <person name="Wakasugi T."/>
            <person name="Sugita M."/>
            <person name="Shinozaki K."/>
            <person name="Sugiura M."/>
        </authorList>
    </citation>
    <scope>NUCLEOTIDE SEQUENCE [GENOMIC DNA]</scope>
</reference>
<reference key="3">
    <citation type="journal article" date="1986" name="EMBO J.">
        <title>The complete nucleotide sequence of the tobacco chloroplast genome: its gene organization and expression.</title>
        <authorList>
            <person name="Shinozaki K."/>
            <person name="Ohme M."/>
            <person name="Tanaka M."/>
            <person name="Wakasugi T."/>
            <person name="Hayashida N."/>
            <person name="Matsubayashi T."/>
            <person name="Zaita N."/>
            <person name="Chunwongse J."/>
            <person name="Obokata J."/>
            <person name="Yamaguchi-Shinozaki K."/>
            <person name="Ohto C."/>
            <person name="Torazawa K."/>
            <person name="Meng B.-Y."/>
            <person name="Sugita M."/>
            <person name="Deno H."/>
            <person name="Kamogashira T."/>
            <person name="Yamada K."/>
            <person name="Kusuda J."/>
            <person name="Takaiwa F."/>
            <person name="Kato A."/>
            <person name="Tohdoh N."/>
            <person name="Shimada H."/>
            <person name="Sugiura M."/>
        </authorList>
    </citation>
    <scope>NUCLEOTIDE SEQUENCE [LARGE SCALE GENOMIC DNA]</scope>
    <source>
        <strain>cv. Bright Yellow 4</strain>
    </source>
</reference>
<reference key="4">
    <citation type="journal article" date="1996" name="Mol. Gen. Genet.">
        <title>Ebb and flow of the chloroplast inverted repeat.</title>
        <authorList>
            <person name="Goulding S.E."/>
            <person name="Olmstead R.G."/>
            <person name="Morden C.W."/>
            <person name="Wolfe K.H."/>
        </authorList>
    </citation>
    <scope>NUCLEOTIDE SEQUENCE [GENOMIC DNA]</scope>
    <source>
        <strain>cv. Samsun NN</strain>
    </source>
</reference>
<reference key="5">
    <citation type="journal article" date="1984" name="Mol. Gen. Genet.">
        <title>Sequence analysis of the junctions between a large inverted repeat and single-copy regions in tobacco chloroplast DNA.</title>
        <authorList>
            <person name="Sugita M."/>
            <person name="Kato A."/>
            <person name="Shimada H."/>
            <person name="Sugiura M."/>
        </authorList>
    </citation>
    <scope>NUCLEOTIDE SEQUENCE [GENOMIC DNA] OF 1-25</scope>
</reference>
<keyword id="KW-0150">Chloroplast</keyword>
<keyword id="KW-0934">Plastid</keyword>
<keyword id="KW-1185">Reference proteome</keyword>
<keyword id="KW-0687">Ribonucleoprotein</keyword>
<keyword id="KW-0689">Ribosomal protein</keyword>
<keyword id="KW-0694">RNA-binding</keyword>
<keyword id="KW-0699">rRNA-binding</keyword>
<accession>P02376</accession>
<accession>Q32702</accession>
<accession>Q36603</accession>
<gene>
    <name type="primary">rps19</name>
</gene>
<protein>
    <recommendedName>
        <fullName evidence="2">Small ribosomal subunit protein uS19c</fullName>
    </recommendedName>
    <alternativeName>
        <fullName>30S ribosomal protein S19, chloroplastic</fullName>
    </alternativeName>
</protein>
<proteinExistence type="inferred from homology"/>
<geneLocation type="chloroplast"/>
<organism>
    <name type="scientific">Nicotiana tabacum</name>
    <name type="common">Common tobacco</name>
    <dbReference type="NCBI Taxonomy" id="4097"/>
    <lineage>
        <taxon>Eukaryota</taxon>
        <taxon>Viridiplantae</taxon>
        <taxon>Streptophyta</taxon>
        <taxon>Embryophyta</taxon>
        <taxon>Tracheophyta</taxon>
        <taxon>Spermatophyta</taxon>
        <taxon>Magnoliopsida</taxon>
        <taxon>eudicotyledons</taxon>
        <taxon>Gunneridae</taxon>
        <taxon>Pentapetalae</taxon>
        <taxon>asterids</taxon>
        <taxon>lamiids</taxon>
        <taxon>Solanales</taxon>
        <taxon>Solanaceae</taxon>
        <taxon>Nicotianoideae</taxon>
        <taxon>Nicotianeae</taxon>
        <taxon>Nicotiana</taxon>
    </lineage>
</organism>
<comment type="function">
    <text evidence="1">Protein S19 forms a complex with S13 that binds strongly to the 16S ribosomal RNA.</text>
</comment>
<comment type="subcellular location">
    <subcellularLocation>
        <location>Plastid</location>
        <location>Chloroplast</location>
    </subcellularLocation>
</comment>
<comment type="similarity">
    <text evidence="2">Belongs to the universal ribosomal protein uS19 family.</text>
</comment>
<evidence type="ECO:0000250" key="1"/>
<evidence type="ECO:0000305" key="2"/>
<dbReference type="EMBL" id="V00163">
    <property type="protein sequence ID" value="CAC35207.1"/>
    <property type="molecule type" value="Genomic_DNA"/>
</dbReference>
<dbReference type="EMBL" id="Z00044">
    <property type="protein sequence ID" value="CAA77383.1"/>
    <property type="molecule type" value="Genomic_DNA"/>
</dbReference>
<dbReference type="EMBL" id="Z71237">
    <property type="protein sequence ID" value="CAA94939.1"/>
    <property type="molecule type" value="Genomic_DNA"/>
</dbReference>
<dbReference type="EMBL" id="X00447">
    <property type="protein sequence ID" value="CAC35208.1"/>
    <property type="molecule type" value="Genomic_DNA"/>
</dbReference>
<dbReference type="PIR" id="A02746">
    <property type="entry name" value="R3NT19"/>
</dbReference>
<dbReference type="RefSeq" id="NP_054539.1">
    <property type="nucleotide sequence ID" value="NC_001879.2"/>
</dbReference>
<dbReference type="SMR" id="P02376"/>
<dbReference type="GeneID" id="800434"/>
<dbReference type="KEGG" id="nta:800434"/>
<dbReference type="OMA" id="KGPFVDP"/>
<dbReference type="OrthoDB" id="2043at2759"/>
<dbReference type="Proteomes" id="UP000084051">
    <property type="component" value="Unplaced"/>
</dbReference>
<dbReference type="GO" id="GO:0009507">
    <property type="term" value="C:chloroplast"/>
    <property type="evidence" value="ECO:0007669"/>
    <property type="project" value="UniProtKB-SubCell"/>
</dbReference>
<dbReference type="GO" id="GO:0015935">
    <property type="term" value="C:small ribosomal subunit"/>
    <property type="evidence" value="ECO:0007669"/>
    <property type="project" value="InterPro"/>
</dbReference>
<dbReference type="GO" id="GO:0019843">
    <property type="term" value="F:rRNA binding"/>
    <property type="evidence" value="ECO:0007669"/>
    <property type="project" value="UniProtKB-UniRule"/>
</dbReference>
<dbReference type="GO" id="GO:0003735">
    <property type="term" value="F:structural constituent of ribosome"/>
    <property type="evidence" value="ECO:0007669"/>
    <property type="project" value="InterPro"/>
</dbReference>
<dbReference type="GO" id="GO:0006412">
    <property type="term" value="P:translation"/>
    <property type="evidence" value="ECO:0007669"/>
    <property type="project" value="UniProtKB-UniRule"/>
</dbReference>
<dbReference type="FunFam" id="3.30.860.10:FF:000001">
    <property type="entry name" value="30S ribosomal protein S19"/>
    <property type="match status" value="1"/>
</dbReference>
<dbReference type="Gene3D" id="3.30.860.10">
    <property type="entry name" value="30s Ribosomal Protein S19, Chain A"/>
    <property type="match status" value="1"/>
</dbReference>
<dbReference type="HAMAP" id="MF_00531">
    <property type="entry name" value="Ribosomal_uS19"/>
    <property type="match status" value="1"/>
</dbReference>
<dbReference type="InterPro" id="IPR002222">
    <property type="entry name" value="Ribosomal_uS19"/>
</dbReference>
<dbReference type="InterPro" id="IPR005732">
    <property type="entry name" value="Ribosomal_uS19_bac-type"/>
</dbReference>
<dbReference type="InterPro" id="IPR020934">
    <property type="entry name" value="Ribosomal_uS19_CS"/>
</dbReference>
<dbReference type="InterPro" id="IPR023575">
    <property type="entry name" value="Ribosomal_uS19_SF"/>
</dbReference>
<dbReference type="NCBIfam" id="TIGR01050">
    <property type="entry name" value="rpsS_bact"/>
    <property type="match status" value="1"/>
</dbReference>
<dbReference type="PANTHER" id="PTHR11880">
    <property type="entry name" value="RIBOSOMAL PROTEIN S19P FAMILY MEMBER"/>
    <property type="match status" value="1"/>
</dbReference>
<dbReference type="PANTHER" id="PTHR11880:SF8">
    <property type="entry name" value="SMALL RIBOSOMAL SUBUNIT PROTEIN US19M"/>
    <property type="match status" value="1"/>
</dbReference>
<dbReference type="Pfam" id="PF00203">
    <property type="entry name" value="Ribosomal_S19"/>
    <property type="match status" value="1"/>
</dbReference>
<dbReference type="PIRSF" id="PIRSF002144">
    <property type="entry name" value="Ribosomal_S19"/>
    <property type="match status" value="1"/>
</dbReference>
<dbReference type="PRINTS" id="PR00975">
    <property type="entry name" value="RIBOSOMALS19"/>
</dbReference>
<dbReference type="SUPFAM" id="SSF54570">
    <property type="entry name" value="Ribosomal protein S19"/>
    <property type="match status" value="1"/>
</dbReference>
<dbReference type="PROSITE" id="PS00323">
    <property type="entry name" value="RIBOSOMAL_S19"/>
    <property type="match status" value="1"/>
</dbReference>
<feature type="initiator methionine" description="Removed" evidence="1">
    <location>
        <position position="1"/>
    </location>
</feature>
<feature type="chain" id="PRO_0000129995" description="Small ribosomal subunit protein uS19c">
    <location>
        <begin position="2"/>
        <end position="92"/>
    </location>
</feature>